<dbReference type="EC" id="3.1.-.-" evidence="1"/>
<dbReference type="EMBL" id="CP000030">
    <property type="protein sequence ID" value="AAV87067.1"/>
    <property type="molecule type" value="Genomic_DNA"/>
</dbReference>
<dbReference type="RefSeq" id="WP_010268936.1">
    <property type="nucleotide sequence ID" value="NZ_AFMU01000059.1"/>
</dbReference>
<dbReference type="SMR" id="Q5P9G3"/>
<dbReference type="GeneID" id="7398542"/>
<dbReference type="KEGG" id="ama:AM1264"/>
<dbReference type="PATRIC" id="fig|320483.3.peg.1096"/>
<dbReference type="HOGENOM" id="CLU_106710_0_0_5"/>
<dbReference type="GO" id="GO:0005737">
    <property type="term" value="C:cytoplasm"/>
    <property type="evidence" value="ECO:0007669"/>
    <property type="project" value="UniProtKB-SubCell"/>
</dbReference>
<dbReference type="GO" id="GO:0004222">
    <property type="term" value="F:metalloendopeptidase activity"/>
    <property type="evidence" value="ECO:0007669"/>
    <property type="project" value="InterPro"/>
</dbReference>
<dbReference type="GO" id="GO:0004521">
    <property type="term" value="F:RNA endonuclease activity"/>
    <property type="evidence" value="ECO:0007669"/>
    <property type="project" value="UniProtKB-UniRule"/>
</dbReference>
<dbReference type="GO" id="GO:0008270">
    <property type="term" value="F:zinc ion binding"/>
    <property type="evidence" value="ECO:0007669"/>
    <property type="project" value="UniProtKB-UniRule"/>
</dbReference>
<dbReference type="GO" id="GO:0006364">
    <property type="term" value="P:rRNA processing"/>
    <property type="evidence" value="ECO:0007669"/>
    <property type="project" value="UniProtKB-UniRule"/>
</dbReference>
<dbReference type="Gene3D" id="3.40.390.30">
    <property type="entry name" value="Metalloproteases ('zincins'), catalytic domain"/>
    <property type="match status" value="1"/>
</dbReference>
<dbReference type="HAMAP" id="MF_00009">
    <property type="entry name" value="Endoribonucl_YbeY"/>
    <property type="match status" value="1"/>
</dbReference>
<dbReference type="InterPro" id="IPR023091">
    <property type="entry name" value="MetalPrtase_cat_dom_sf_prd"/>
</dbReference>
<dbReference type="InterPro" id="IPR002036">
    <property type="entry name" value="YbeY"/>
</dbReference>
<dbReference type="InterPro" id="IPR020549">
    <property type="entry name" value="YbeY_CS"/>
</dbReference>
<dbReference type="NCBIfam" id="TIGR00043">
    <property type="entry name" value="rRNA maturation RNase YbeY"/>
    <property type="match status" value="1"/>
</dbReference>
<dbReference type="PANTHER" id="PTHR46986">
    <property type="entry name" value="ENDORIBONUCLEASE YBEY, CHLOROPLASTIC"/>
    <property type="match status" value="1"/>
</dbReference>
<dbReference type="PANTHER" id="PTHR46986:SF1">
    <property type="entry name" value="ENDORIBONUCLEASE YBEY, CHLOROPLASTIC"/>
    <property type="match status" value="1"/>
</dbReference>
<dbReference type="Pfam" id="PF02130">
    <property type="entry name" value="YbeY"/>
    <property type="match status" value="1"/>
</dbReference>
<dbReference type="SUPFAM" id="SSF55486">
    <property type="entry name" value="Metalloproteases ('zincins'), catalytic domain"/>
    <property type="match status" value="1"/>
</dbReference>
<dbReference type="PROSITE" id="PS01306">
    <property type="entry name" value="UPF0054"/>
    <property type="match status" value="1"/>
</dbReference>
<gene>
    <name evidence="1" type="primary">ybeY</name>
    <name type="ordered locus">AM1264</name>
</gene>
<organism>
    <name type="scientific">Anaplasma marginale (strain St. Maries)</name>
    <dbReference type="NCBI Taxonomy" id="234826"/>
    <lineage>
        <taxon>Bacteria</taxon>
        <taxon>Pseudomonadati</taxon>
        <taxon>Pseudomonadota</taxon>
        <taxon>Alphaproteobacteria</taxon>
        <taxon>Rickettsiales</taxon>
        <taxon>Anaplasmataceae</taxon>
        <taxon>Anaplasma</taxon>
    </lineage>
</organism>
<sequence>MIEVNIHTRGWYKLVGKPKTSAKRVIRFCLSELDITKYDPKVFVVLANDALLLELNSQYRGIHKATNVLSFSYEKLSPGCCLGEIYLSMERIAEESLEMDVAVRSHFFHMLIHGMLHILGYDHEEPEEAITMQALEVGLLAKLGIRNPYVPRET</sequence>
<name>YBEY_ANAMM</name>
<reference key="1">
    <citation type="journal article" date="2005" name="Proc. Natl. Acad. Sci. U.S.A.">
        <title>Complete genome sequencing of Anaplasma marginale reveals that the surface is skewed to two superfamilies of outer membrane proteins.</title>
        <authorList>
            <person name="Brayton K.A."/>
            <person name="Kappmeyer L.S."/>
            <person name="Herndon D.R."/>
            <person name="Dark M.J."/>
            <person name="Tibbals D.L."/>
            <person name="Palmer G.H."/>
            <person name="McGuire T.C."/>
            <person name="Knowles D.P. Jr."/>
        </authorList>
    </citation>
    <scope>NUCLEOTIDE SEQUENCE [LARGE SCALE GENOMIC DNA]</scope>
    <source>
        <strain>St. Maries</strain>
    </source>
</reference>
<accession>Q5P9G3</accession>
<evidence type="ECO:0000255" key="1">
    <source>
        <dbReference type="HAMAP-Rule" id="MF_00009"/>
    </source>
</evidence>
<protein>
    <recommendedName>
        <fullName evidence="1">Endoribonuclease YbeY</fullName>
        <ecNumber evidence="1">3.1.-.-</ecNumber>
    </recommendedName>
</protein>
<comment type="function">
    <text evidence="1">Single strand-specific metallo-endoribonuclease involved in late-stage 70S ribosome quality control and in maturation of the 3' terminus of the 16S rRNA.</text>
</comment>
<comment type="cofactor">
    <cofactor evidence="1">
        <name>Zn(2+)</name>
        <dbReference type="ChEBI" id="CHEBI:29105"/>
    </cofactor>
    <text evidence="1">Binds 1 zinc ion.</text>
</comment>
<comment type="subcellular location">
    <subcellularLocation>
        <location evidence="1">Cytoplasm</location>
    </subcellularLocation>
</comment>
<comment type="similarity">
    <text evidence="1">Belongs to the endoribonuclease YbeY family.</text>
</comment>
<proteinExistence type="inferred from homology"/>
<keyword id="KW-0963">Cytoplasm</keyword>
<keyword id="KW-0255">Endonuclease</keyword>
<keyword id="KW-0378">Hydrolase</keyword>
<keyword id="KW-0479">Metal-binding</keyword>
<keyword id="KW-0540">Nuclease</keyword>
<keyword id="KW-0690">Ribosome biogenesis</keyword>
<keyword id="KW-0698">rRNA processing</keyword>
<keyword id="KW-0862">Zinc</keyword>
<feature type="chain" id="PRO_0000102398" description="Endoribonuclease YbeY">
    <location>
        <begin position="1"/>
        <end position="154"/>
    </location>
</feature>
<feature type="binding site" evidence="1">
    <location>
        <position position="113"/>
    </location>
    <ligand>
        <name>Zn(2+)</name>
        <dbReference type="ChEBI" id="CHEBI:29105"/>
        <note>catalytic</note>
    </ligand>
</feature>
<feature type="binding site" evidence="1">
    <location>
        <position position="117"/>
    </location>
    <ligand>
        <name>Zn(2+)</name>
        <dbReference type="ChEBI" id="CHEBI:29105"/>
        <note>catalytic</note>
    </ligand>
</feature>
<feature type="binding site" evidence="1">
    <location>
        <position position="123"/>
    </location>
    <ligand>
        <name>Zn(2+)</name>
        <dbReference type="ChEBI" id="CHEBI:29105"/>
        <note>catalytic</note>
    </ligand>
</feature>